<proteinExistence type="evidence at transcript level"/>
<protein>
    <recommendedName>
        <fullName>Zinc finger C2HC domain-containing protein 1C</fullName>
    </recommendedName>
</protein>
<sequence>MAGLQLAPHLPVGVMFPHNKTEAPGLHSAKHDPYEQSDSSQRPSMGHLRNSFQSKLWSNTEMEQEDEVSTRPKRNVCTKARRHSCPHSAGIRQQGSGNNAQGQGKGLFYLSSPTPRYPKANDQDFIPFRRKRVGVDRAYPLKPMVHRKSHSTSDAGADGDQNGYPRLPDSSEFSDNSFGLRSWVNSSLLASVQAEKVVAELHRTEWTQIQRLEAAGESLQKEIRRKEILLQEKLKKTEEGLRRMQKEKKQAIFQEDRELQRMVLPRRRVRDGDHDTPHKPCLSPEFRSEVFSRNRGEDQTCDQAQENPSPRQLSDYELQKLKRERLMASNSKIRDQDAGPSADAFFQPAEELGSTLQESSRSGTPGSSGSSSSTEEPELAKCSHCGRSFLSLRLQRHSTVCGKMQGSKRKVFDSSRARAKGTELEQYLNWRGPATAKAETPPPPRKSTWRQKHESFIRTLRHARQVQQVIARGGNPSDLPSILPADNPDYVQCPHCSRHFAPKVAERHIPKCKTIKNRPPPPRRHDS</sequence>
<gene>
    <name type="primary">Zc2hc1c</name>
    <name type="synonym">Fam164c</name>
</gene>
<accession>Q8CCG1</accession>
<accession>Q8CCM8</accession>
<comment type="cofactor">
    <cofactor evidence="2">
        <name>Zn(2+)</name>
        <dbReference type="ChEBI" id="CHEBI:29105"/>
    </cofactor>
</comment>
<comment type="similarity">
    <text evidence="4">Belongs to the ZC2HC1 family.</text>
</comment>
<reference key="1">
    <citation type="journal article" date="2005" name="Science">
        <title>The transcriptional landscape of the mammalian genome.</title>
        <authorList>
            <person name="Carninci P."/>
            <person name="Kasukawa T."/>
            <person name="Katayama S."/>
            <person name="Gough J."/>
            <person name="Frith M.C."/>
            <person name="Maeda N."/>
            <person name="Oyama R."/>
            <person name="Ravasi T."/>
            <person name="Lenhard B."/>
            <person name="Wells C."/>
            <person name="Kodzius R."/>
            <person name="Shimokawa K."/>
            <person name="Bajic V.B."/>
            <person name="Brenner S.E."/>
            <person name="Batalov S."/>
            <person name="Forrest A.R."/>
            <person name="Zavolan M."/>
            <person name="Davis M.J."/>
            <person name="Wilming L.G."/>
            <person name="Aidinis V."/>
            <person name="Allen J.E."/>
            <person name="Ambesi-Impiombato A."/>
            <person name="Apweiler R."/>
            <person name="Aturaliya R.N."/>
            <person name="Bailey T.L."/>
            <person name="Bansal M."/>
            <person name="Baxter L."/>
            <person name="Beisel K.W."/>
            <person name="Bersano T."/>
            <person name="Bono H."/>
            <person name="Chalk A.M."/>
            <person name="Chiu K.P."/>
            <person name="Choudhary V."/>
            <person name="Christoffels A."/>
            <person name="Clutterbuck D.R."/>
            <person name="Crowe M.L."/>
            <person name="Dalla E."/>
            <person name="Dalrymple B.P."/>
            <person name="de Bono B."/>
            <person name="Della Gatta G."/>
            <person name="di Bernardo D."/>
            <person name="Down T."/>
            <person name="Engstrom P."/>
            <person name="Fagiolini M."/>
            <person name="Faulkner G."/>
            <person name="Fletcher C.F."/>
            <person name="Fukushima T."/>
            <person name="Furuno M."/>
            <person name="Futaki S."/>
            <person name="Gariboldi M."/>
            <person name="Georgii-Hemming P."/>
            <person name="Gingeras T.R."/>
            <person name="Gojobori T."/>
            <person name="Green R.E."/>
            <person name="Gustincich S."/>
            <person name="Harbers M."/>
            <person name="Hayashi Y."/>
            <person name="Hensch T.K."/>
            <person name="Hirokawa N."/>
            <person name="Hill D."/>
            <person name="Huminiecki L."/>
            <person name="Iacono M."/>
            <person name="Ikeo K."/>
            <person name="Iwama A."/>
            <person name="Ishikawa T."/>
            <person name="Jakt M."/>
            <person name="Kanapin A."/>
            <person name="Katoh M."/>
            <person name="Kawasawa Y."/>
            <person name="Kelso J."/>
            <person name="Kitamura H."/>
            <person name="Kitano H."/>
            <person name="Kollias G."/>
            <person name="Krishnan S.P."/>
            <person name="Kruger A."/>
            <person name="Kummerfeld S.K."/>
            <person name="Kurochkin I.V."/>
            <person name="Lareau L.F."/>
            <person name="Lazarevic D."/>
            <person name="Lipovich L."/>
            <person name="Liu J."/>
            <person name="Liuni S."/>
            <person name="McWilliam S."/>
            <person name="Madan Babu M."/>
            <person name="Madera M."/>
            <person name="Marchionni L."/>
            <person name="Matsuda H."/>
            <person name="Matsuzawa S."/>
            <person name="Miki H."/>
            <person name="Mignone F."/>
            <person name="Miyake S."/>
            <person name="Morris K."/>
            <person name="Mottagui-Tabar S."/>
            <person name="Mulder N."/>
            <person name="Nakano N."/>
            <person name="Nakauchi H."/>
            <person name="Ng P."/>
            <person name="Nilsson R."/>
            <person name="Nishiguchi S."/>
            <person name="Nishikawa S."/>
            <person name="Nori F."/>
            <person name="Ohara O."/>
            <person name="Okazaki Y."/>
            <person name="Orlando V."/>
            <person name="Pang K.C."/>
            <person name="Pavan W.J."/>
            <person name="Pavesi G."/>
            <person name="Pesole G."/>
            <person name="Petrovsky N."/>
            <person name="Piazza S."/>
            <person name="Reed J."/>
            <person name="Reid J.F."/>
            <person name="Ring B.Z."/>
            <person name="Ringwald M."/>
            <person name="Rost B."/>
            <person name="Ruan Y."/>
            <person name="Salzberg S.L."/>
            <person name="Sandelin A."/>
            <person name="Schneider C."/>
            <person name="Schoenbach C."/>
            <person name="Sekiguchi K."/>
            <person name="Semple C.A."/>
            <person name="Seno S."/>
            <person name="Sessa L."/>
            <person name="Sheng Y."/>
            <person name="Shibata Y."/>
            <person name="Shimada H."/>
            <person name="Shimada K."/>
            <person name="Silva D."/>
            <person name="Sinclair B."/>
            <person name="Sperling S."/>
            <person name="Stupka E."/>
            <person name="Sugiura K."/>
            <person name="Sultana R."/>
            <person name="Takenaka Y."/>
            <person name="Taki K."/>
            <person name="Tammoja K."/>
            <person name="Tan S.L."/>
            <person name="Tang S."/>
            <person name="Taylor M.S."/>
            <person name="Tegner J."/>
            <person name="Teichmann S.A."/>
            <person name="Ueda H.R."/>
            <person name="van Nimwegen E."/>
            <person name="Verardo R."/>
            <person name="Wei C.L."/>
            <person name="Yagi K."/>
            <person name="Yamanishi H."/>
            <person name="Zabarovsky E."/>
            <person name="Zhu S."/>
            <person name="Zimmer A."/>
            <person name="Hide W."/>
            <person name="Bult C."/>
            <person name="Grimmond S.M."/>
            <person name="Teasdale R.D."/>
            <person name="Liu E.T."/>
            <person name="Brusic V."/>
            <person name="Quackenbush J."/>
            <person name="Wahlestedt C."/>
            <person name="Mattick J.S."/>
            <person name="Hume D.A."/>
            <person name="Kai C."/>
            <person name="Sasaki D."/>
            <person name="Tomaru Y."/>
            <person name="Fukuda S."/>
            <person name="Kanamori-Katayama M."/>
            <person name="Suzuki M."/>
            <person name="Aoki J."/>
            <person name="Arakawa T."/>
            <person name="Iida J."/>
            <person name="Imamura K."/>
            <person name="Itoh M."/>
            <person name="Kato T."/>
            <person name="Kawaji H."/>
            <person name="Kawagashira N."/>
            <person name="Kawashima T."/>
            <person name="Kojima M."/>
            <person name="Kondo S."/>
            <person name="Konno H."/>
            <person name="Nakano K."/>
            <person name="Ninomiya N."/>
            <person name="Nishio T."/>
            <person name="Okada M."/>
            <person name="Plessy C."/>
            <person name="Shibata K."/>
            <person name="Shiraki T."/>
            <person name="Suzuki S."/>
            <person name="Tagami M."/>
            <person name="Waki K."/>
            <person name="Watahiki A."/>
            <person name="Okamura-Oho Y."/>
            <person name="Suzuki H."/>
            <person name="Kawai J."/>
            <person name="Hayashizaki Y."/>
        </authorList>
    </citation>
    <scope>NUCLEOTIDE SEQUENCE [LARGE SCALE MRNA]</scope>
    <source>
        <strain>C57BL/6J</strain>
        <tissue>Testis</tissue>
    </source>
</reference>
<reference key="2">
    <citation type="journal article" date="2004" name="Genome Res.">
        <title>The status, quality, and expansion of the NIH full-length cDNA project: the Mammalian Gene Collection (MGC).</title>
        <authorList>
            <consortium name="The MGC Project Team"/>
        </authorList>
    </citation>
    <scope>NUCLEOTIDE SEQUENCE [LARGE SCALE MRNA]</scope>
    <source>
        <strain>C57BL/6J</strain>
        <tissue>Olfactory epithelium</tissue>
    </source>
</reference>
<feature type="chain" id="PRO_0000089942" description="Zinc finger C2HC domain-containing protein 1C">
    <location>
        <begin position="1"/>
        <end position="527"/>
    </location>
</feature>
<feature type="zinc finger region" description="C2HC/C3H-type 1" evidence="2">
    <location>
        <begin position="378"/>
        <end position="407"/>
    </location>
</feature>
<feature type="zinc finger region" description="C2HC/C3H-type 2" evidence="2">
    <location>
        <begin position="489"/>
        <end position="518"/>
    </location>
</feature>
<feature type="region of interest" description="Disordered" evidence="3">
    <location>
        <begin position="18"/>
        <end position="105"/>
    </location>
</feature>
<feature type="region of interest" description="Disordered" evidence="3">
    <location>
        <begin position="145"/>
        <end position="170"/>
    </location>
</feature>
<feature type="region of interest" description="Disordered" evidence="3">
    <location>
        <begin position="264"/>
        <end position="316"/>
    </location>
</feature>
<feature type="region of interest" description="Disordered" evidence="3">
    <location>
        <begin position="352"/>
        <end position="379"/>
    </location>
</feature>
<feature type="region of interest" description="Disordered" evidence="3">
    <location>
        <begin position="507"/>
        <end position="527"/>
    </location>
</feature>
<feature type="coiled-coil region" evidence="1">
    <location>
        <begin position="207"/>
        <end position="254"/>
    </location>
</feature>
<feature type="compositionally biased region" description="Polar residues" evidence="3">
    <location>
        <begin position="50"/>
        <end position="61"/>
    </location>
</feature>
<feature type="compositionally biased region" description="Basic residues" evidence="3">
    <location>
        <begin position="71"/>
        <end position="85"/>
    </location>
</feature>
<feature type="compositionally biased region" description="Low complexity" evidence="3">
    <location>
        <begin position="93"/>
        <end position="102"/>
    </location>
</feature>
<feature type="compositionally biased region" description="Basic and acidic residues" evidence="3">
    <location>
        <begin position="286"/>
        <end position="298"/>
    </location>
</feature>
<feature type="compositionally biased region" description="Polar residues" evidence="3">
    <location>
        <begin position="301"/>
        <end position="312"/>
    </location>
</feature>
<feature type="compositionally biased region" description="Low complexity" evidence="3">
    <location>
        <begin position="358"/>
        <end position="374"/>
    </location>
</feature>
<feature type="binding site" evidence="2">
    <location>
        <position position="382"/>
    </location>
    <ligand>
        <name>Zn(2+)</name>
        <dbReference type="ChEBI" id="CHEBI:29105"/>
        <label>1</label>
    </ligand>
</feature>
<feature type="binding site" evidence="2">
    <location>
        <position position="385"/>
    </location>
    <ligand>
        <name>Zn(2+)</name>
        <dbReference type="ChEBI" id="CHEBI:29105"/>
        <label>1</label>
    </ligand>
</feature>
<feature type="binding site" evidence="2">
    <location>
        <position position="397"/>
    </location>
    <ligand>
        <name>Zn(2+)</name>
        <dbReference type="ChEBI" id="CHEBI:29105"/>
        <label>1</label>
    </ligand>
</feature>
<feature type="binding site" evidence="2">
    <location>
        <position position="401"/>
    </location>
    <ligand>
        <name>Zn(2+)</name>
        <dbReference type="ChEBI" id="CHEBI:29105"/>
        <label>1</label>
    </ligand>
</feature>
<feature type="binding site" evidence="2">
    <location>
        <position position="493"/>
    </location>
    <ligand>
        <name>Zn(2+)</name>
        <dbReference type="ChEBI" id="CHEBI:29105"/>
        <label>2</label>
    </ligand>
</feature>
<feature type="binding site" evidence="2">
    <location>
        <position position="496"/>
    </location>
    <ligand>
        <name>Zn(2+)</name>
        <dbReference type="ChEBI" id="CHEBI:29105"/>
        <label>2</label>
    </ligand>
</feature>
<feature type="binding site" evidence="2">
    <location>
        <position position="508"/>
    </location>
    <ligand>
        <name>Zn(2+)</name>
        <dbReference type="ChEBI" id="CHEBI:29105"/>
        <label>2</label>
    </ligand>
</feature>
<feature type="binding site" evidence="2">
    <location>
        <position position="512"/>
    </location>
    <ligand>
        <name>Zn(2+)</name>
        <dbReference type="ChEBI" id="CHEBI:29105"/>
        <label>2</label>
    </ligand>
</feature>
<feature type="sequence conflict" description="In Ref. 1; BAC27877." evidence="4" ref="1">
    <original>N</original>
    <variation>K</variation>
    <location>
        <position position="59"/>
    </location>
</feature>
<evidence type="ECO:0000255" key="1"/>
<evidence type="ECO:0000255" key="2">
    <source>
        <dbReference type="PROSITE-ProRule" id="PRU01371"/>
    </source>
</evidence>
<evidence type="ECO:0000256" key="3">
    <source>
        <dbReference type="SAM" id="MobiDB-lite"/>
    </source>
</evidence>
<evidence type="ECO:0000305" key="4"/>
<organism>
    <name type="scientific">Mus musculus</name>
    <name type="common">Mouse</name>
    <dbReference type="NCBI Taxonomy" id="10090"/>
    <lineage>
        <taxon>Eukaryota</taxon>
        <taxon>Metazoa</taxon>
        <taxon>Chordata</taxon>
        <taxon>Craniata</taxon>
        <taxon>Vertebrata</taxon>
        <taxon>Euteleostomi</taxon>
        <taxon>Mammalia</taxon>
        <taxon>Eutheria</taxon>
        <taxon>Euarchontoglires</taxon>
        <taxon>Glires</taxon>
        <taxon>Rodentia</taxon>
        <taxon>Myomorpha</taxon>
        <taxon>Muroidea</taxon>
        <taxon>Muridae</taxon>
        <taxon>Murinae</taxon>
        <taxon>Mus</taxon>
        <taxon>Mus</taxon>
    </lineage>
</organism>
<keyword id="KW-0175">Coiled coil</keyword>
<keyword id="KW-0479">Metal-binding</keyword>
<keyword id="KW-1185">Reference proteome</keyword>
<keyword id="KW-0677">Repeat</keyword>
<keyword id="KW-0862">Zinc</keyword>
<keyword id="KW-0863">Zinc-finger</keyword>
<dbReference type="EMBL" id="AK032455">
    <property type="protein sequence ID" value="BAC27877.1"/>
    <property type="molecule type" value="mRNA"/>
</dbReference>
<dbReference type="EMBL" id="AK033213">
    <property type="protein sequence ID" value="BAC28200.1"/>
    <property type="molecule type" value="mRNA"/>
</dbReference>
<dbReference type="EMBL" id="BC049940">
    <property type="protein sequence ID" value="AAH49940.1"/>
    <property type="molecule type" value="mRNA"/>
</dbReference>
<dbReference type="CCDS" id="CCDS26056.1"/>
<dbReference type="RefSeq" id="NP_766002.2">
    <property type="nucleotide sequence ID" value="NM_172414.4"/>
</dbReference>
<dbReference type="RefSeq" id="XP_006516332.1">
    <property type="nucleotide sequence ID" value="XM_006516269.4"/>
</dbReference>
<dbReference type="RefSeq" id="XP_006516333.1">
    <property type="nucleotide sequence ID" value="XM_006516270.3"/>
</dbReference>
<dbReference type="RefSeq" id="XP_036013516.1">
    <property type="nucleotide sequence ID" value="XM_036157623.1"/>
</dbReference>
<dbReference type="SMR" id="Q8CCG1"/>
<dbReference type="BioGRID" id="215328">
    <property type="interactions" value="1"/>
</dbReference>
<dbReference type="FunCoup" id="Q8CCG1">
    <property type="interactions" value="27"/>
</dbReference>
<dbReference type="STRING" id="10090.ENSMUSP00000051664"/>
<dbReference type="GlyGen" id="Q8CCG1">
    <property type="glycosylation" value="1 site"/>
</dbReference>
<dbReference type="iPTMnet" id="Q8CCG1"/>
<dbReference type="PhosphoSitePlus" id="Q8CCG1"/>
<dbReference type="PaxDb" id="10090-ENSMUSP00000051664"/>
<dbReference type="ProteomicsDB" id="275237"/>
<dbReference type="Antibodypedia" id="25790">
    <property type="antibodies" value="52 antibodies from 18 providers"/>
</dbReference>
<dbReference type="DNASU" id="72350"/>
<dbReference type="Ensembl" id="ENSMUST00000059341.5">
    <property type="protein sequence ID" value="ENSMUSP00000051664.5"/>
    <property type="gene ID" value="ENSMUSG00000045064.6"/>
</dbReference>
<dbReference type="GeneID" id="72350"/>
<dbReference type="KEGG" id="mmu:72350"/>
<dbReference type="UCSC" id="uc007ogw.2">
    <property type="organism name" value="mouse"/>
</dbReference>
<dbReference type="AGR" id="MGI:1919600"/>
<dbReference type="CTD" id="79696"/>
<dbReference type="MGI" id="MGI:1919600">
    <property type="gene designation" value="Zc2hc1c"/>
</dbReference>
<dbReference type="VEuPathDB" id="HostDB:ENSMUSG00000045064"/>
<dbReference type="eggNOG" id="KOG3940">
    <property type="taxonomic scope" value="Eukaryota"/>
</dbReference>
<dbReference type="GeneTree" id="ENSGT00940000160947"/>
<dbReference type="HOGENOM" id="CLU_039058_0_0_1"/>
<dbReference type="InParanoid" id="Q8CCG1"/>
<dbReference type="OMA" id="WGRSQEN"/>
<dbReference type="OrthoDB" id="10255185at2759"/>
<dbReference type="PhylomeDB" id="Q8CCG1"/>
<dbReference type="TreeFam" id="TF319585"/>
<dbReference type="BioGRID-ORCS" id="72350">
    <property type="hits" value="2 hits in 76 CRISPR screens"/>
</dbReference>
<dbReference type="ChiTaRS" id="Zc2hc1c">
    <property type="organism name" value="mouse"/>
</dbReference>
<dbReference type="PRO" id="PR:Q8CCG1"/>
<dbReference type="Proteomes" id="UP000000589">
    <property type="component" value="Chromosome 12"/>
</dbReference>
<dbReference type="RNAct" id="Q8CCG1">
    <property type="molecule type" value="protein"/>
</dbReference>
<dbReference type="Bgee" id="ENSMUSG00000045064">
    <property type="expression patterns" value="Expressed in spermatid and 119 other cell types or tissues"/>
</dbReference>
<dbReference type="ExpressionAtlas" id="Q8CCG1">
    <property type="expression patterns" value="baseline and differential"/>
</dbReference>
<dbReference type="GO" id="GO:0008270">
    <property type="term" value="F:zinc ion binding"/>
    <property type="evidence" value="ECO:0007669"/>
    <property type="project" value="UniProtKB-KW"/>
</dbReference>
<dbReference type="Gene3D" id="3.30.160.60">
    <property type="entry name" value="Classic Zinc Finger"/>
    <property type="match status" value="1"/>
</dbReference>
<dbReference type="InterPro" id="IPR049899">
    <property type="entry name" value="Znf_C2HC_C3H"/>
</dbReference>
<dbReference type="InterPro" id="IPR026104">
    <property type="entry name" value="ZNF_C2HC_dom_1C"/>
</dbReference>
<dbReference type="PANTHER" id="PTHR14649">
    <property type="entry name" value="ZINC FINGER C2HC DOMAIN-CONTAINING PROTEIN 1C"/>
    <property type="match status" value="1"/>
</dbReference>
<dbReference type="PANTHER" id="PTHR14649:SF1">
    <property type="entry name" value="ZINC FINGER C2HC DOMAIN-CONTAINING PROTEIN 1C"/>
    <property type="match status" value="1"/>
</dbReference>
<dbReference type="Pfam" id="PF13913">
    <property type="entry name" value="zf-C2HC_2"/>
    <property type="match status" value="2"/>
</dbReference>
<dbReference type="PROSITE" id="PS52027">
    <property type="entry name" value="ZF_C2HC_C3H"/>
    <property type="match status" value="2"/>
</dbReference>
<name>ZC21C_MOUSE</name>